<accession>A8MRD9</accession>
<accession>A0A1P8ARR1</accession>
<accession>Q9SAI0</accession>
<name>PDS5D_ARATH</name>
<comment type="function">
    <text evidence="1 5">Cohesin cofactor dispensable during the meiotic division but playing an important role in DNA repair by homologous recombination (HR) probably by helping SMC5/SMC6 complex (PubMed:26648949). Regulator of sister chromatid cohesion in mitosis which may stabilize cohesin complex association with chromatin (PubMed:26648949). May couple sister chromatid cohesion during mitosis to DNA replication (By similarity). Cohesion ensures that chromosome partitioning is accurate in both meiotic and mitotic cells and plays an important role in DNA repair (PubMed:26648949).</text>
</comment>
<comment type="subunit">
    <text evidence="1">Interacts with the cohesin complex.</text>
</comment>
<comment type="subcellular location">
    <subcellularLocation>
        <location evidence="3">Nucleus</location>
    </subcellularLocation>
</comment>
<comment type="alternative products">
    <event type="alternative splicing"/>
    <isoform>
        <id>A8MRD9-1</id>
        <name>1</name>
        <sequence type="displayed"/>
    </isoform>
    <isoform>
        <id>A8MRD9-2</id>
        <name>2</name>
        <sequence type="described" ref="VSP_061118"/>
    </isoform>
</comment>
<comment type="disruption phenotype">
    <text evidence="5">Weak impact on meiosis such as formation of some chromosome bridges at late anaphase I and telophase I in forming pollen, but severe effects on development, fertility, somatic homologous recombination (HR) and DNA repair, especially in plants lacking PDS5A, PDS5B, PDS5C, PDS5D and PDS5E.</text>
</comment>
<comment type="similarity">
    <text evidence="8">Belongs to the PDS5 family.</text>
</comment>
<comment type="sequence caution" evidence="8">
    <conflict type="erroneous gene model prediction">
        <sequence resource="EMBL-CDS" id="AAF14668"/>
    </conflict>
</comment>
<evidence type="ECO:0000250" key="1">
    <source>
        <dbReference type="UniProtKB" id="Q29RF7"/>
    </source>
</evidence>
<evidence type="ECO:0000255" key="2"/>
<evidence type="ECO:0000255" key="3">
    <source>
        <dbReference type="PROSITE-ProRule" id="PRU00768"/>
    </source>
</evidence>
<evidence type="ECO:0000256" key="4">
    <source>
        <dbReference type="SAM" id="MobiDB-lite"/>
    </source>
</evidence>
<evidence type="ECO:0000269" key="5">
    <source>
    </source>
</evidence>
<evidence type="ECO:0000303" key="6">
    <source>
    </source>
</evidence>
<evidence type="ECO:0000303" key="7">
    <source>
    </source>
</evidence>
<evidence type="ECO:0000305" key="8"/>
<evidence type="ECO:0000312" key="9">
    <source>
        <dbReference type="Araport" id="AT1G80810"/>
    </source>
</evidence>
<evidence type="ECO:0000312" key="10">
    <source>
        <dbReference type="EMBL" id="AAF14668.1"/>
    </source>
</evidence>
<proteinExistence type="evidence at transcript level"/>
<sequence>MTAIVGFDQLSKALIDAGTNLLSPPSSTDDLLTLLDETESLLKNVEQDQPLSMQSALIPSRNALVSVDLLSHPDSDVRVSVVSCLTEIVRITAPETPYSDDLMKEIFRLTIEAFEKLADASSRSYKKAEFVLDNVAKVKSCLVMLDLECYDLILQMFRNFFKFIRSDHPQLVFSSMELIMIAIIDETEQVSTDLLDSLLATVKKENQNVSPMSWSLAEKVLSRCARKLKPYIIEALKSRGTSLDMYSPVVSSICQSVFNTPKVHSPVNTKEHEEKLDLGHSRKENLSKSSSKRPARHETRGINEKEKVRNGNKSSLLKQSLKQVRSESTDAEITGKRGRKPNSLMNPEDYDISWLSGKRDPLKTSSNKKIQKKGSGGVSSLGKVPAKKTPLPKENSPATSSRSLTGSLKRSRVKMDESDYDSDSLSSPRLKKLASCFRDEEPNQEDDRKIGNSSKQTRSKNGLEKSQKTAKKKPVVEAKIVNSSGKRLSARSVAKRRNLERAPLDTLVPQSSKRKKMVSQVAARQLANESEEETPKSHPTRRRTVRKEVESDGFGEDLVGKRVNIWWPLDKTFYEGVIDSYCTRKKMHRVIYSDGDSEELNLTEERWELLEDDTSADEDKEIDLPESIPLSDIMQRQKVKKSKNVAVSVEPTSSSGVRSSSRTLMKKDCGKRLNKQVEKTREGKNLRSLKELNAETDRTAEEQEVSLEAESDDRSEEQEYEDDCSDKKEQSQDKGVEAETKEEEKQYPNSEGESEGEDSESEEEPKWRETDDMEDDEEEEEEEIDHMEDEAEEEKEEVDDKEASANMSEIEKEEEEEEEDEEKRKS</sequence>
<gene>
    <name evidence="6" type="primary">PDS5D</name>
    <name evidence="7" type="synonym">SL2</name>
    <name evidence="9" type="ordered locus">At1g80810</name>
    <name evidence="10" type="ORF">F23A5.16</name>
</gene>
<keyword id="KW-0025">Alternative splicing</keyword>
<keyword id="KW-0131">Cell cycle</keyword>
<keyword id="KW-0132">Cell division</keyword>
<keyword id="KW-0175">Coiled coil</keyword>
<keyword id="KW-0227">DNA damage</keyword>
<keyword id="KW-0234">DNA repair</keyword>
<keyword id="KW-0498">Mitosis</keyword>
<keyword id="KW-0539">Nucleus</keyword>
<keyword id="KW-1185">Reference proteome</keyword>
<keyword id="KW-0677">Repeat</keyword>
<reference key="1">
    <citation type="journal article" date="2000" name="Nature">
        <title>Sequence and analysis of chromosome 1 of the plant Arabidopsis thaliana.</title>
        <authorList>
            <person name="Theologis A."/>
            <person name="Ecker J.R."/>
            <person name="Palm C.J."/>
            <person name="Federspiel N.A."/>
            <person name="Kaul S."/>
            <person name="White O."/>
            <person name="Alonso J."/>
            <person name="Altafi H."/>
            <person name="Araujo R."/>
            <person name="Bowman C.L."/>
            <person name="Brooks S.Y."/>
            <person name="Buehler E."/>
            <person name="Chan A."/>
            <person name="Chao Q."/>
            <person name="Chen H."/>
            <person name="Cheuk R.F."/>
            <person name="Chin C.W."/>
            <person name="Chung M.K."/>
            <person name="Conn L."/>
            <person name="Conway A.B."/>
            <person name="Conway A.R."/>
            <person name="Creasy T.H."/>
            <person name="Dewar K."/>
            <person name="Dunn P."/>
            <person name="Etgu P."/>
            <person name="Feldblyum T.V."/>
            <person name="Feng J.-D."/>
            <person name="Fong B."/>
            <person name="Fujii C.Y."/>
            <person name="Gill J.E."/>
            <person name="Goldsmith A.D."/>
            <person name="Haas B."/>
            <person name="Hansen N.F."/>
            <person name="Hughes B."/>
            <person name="Huizar L."/>
            <person name="Hunter J.L."/>
            <person name="Jenkins J."/>
            <person name="Johnson-Hopson C."/>
            <person name="Khan S."/>
            <person name="Khaykin E."/>
            <person name="Kim C.J."/>
            <person name="Koo H.L."/>
            <person name="Kremenetskaia I."/>
            <person name="Kurtz D.B."/>
            <person name="Kwan A."/>
            <person name="Lam B."/>
            <person name="Langin-Hooper S."/>
            <person name="Lee A."/>
            <person name="Lee J.M."/>
            <person name="Lenz C.A."/>
            <person name="Li J.H."/>
            <person name="Li Y.-P."/>
            <person name="Lin X."/>
            <person name="Liu S.X."/>
            <person name="Liu Z.A."/>
            <person name="Luros J.S."/>
            <person name="Maiti R."/>
            <person name="Marziali A."/>
            <person name="Militscher J."/>
            <person name="Miranda M."/>
            <person name="Nguyen M."/>
            <person name="Nierman W.C."/>
            <person name="Osborne B.I."/>
            <person name="Pai G."/>
            <person name="Peterson J."/>
            <person name="Pham P.K."/>
            <person name="Rizzo M."/>
            <person name="Rooney T."/>
            <person name="Rowley D."/>
            <person name="Sakano H."/>
            <person name="Salzberg S.L."/>
            <person name="Schwartz J.R."/>
            <person name="Shinn P."/>
            <person name="Southwick A.M."/>
            <person name="Sun H."/>
            <person name="Tallon L.J."/>
            <person name="Tambunga G."/>
            <person name="Toriumi M.J."/>
            <person name="Town C.D."/>
            <person name="Utterback T."/>
            <person name="Van Aken S."/>
            <person name="Vaysberg M."/>
            <person name="Vysotskaia V.S."/>
            <person name="Walker M."/>
            <person name="Wu D."/>
            <person name="Yu G."/>
            <person name="Fraser C.M."/>
            <person name="Venter J.C."/>
            <person name="Davis R.W."/>
        </authorList>
    </citation>
    <scope>NUCLEOTIDE SEQUENCE [LARGE SCALE GENOMIC DNA]</scope>
    <source>
        <strain>cv. Columbia</strain>
    </source>
</reference>
<reference key="2">
    <citation type="journal article" date="2017" name="Plant J.">
        <title>Araport11: a complete reannotation of the Arabidopsis thaliana reference genome.</title>
        <authorList>
            <person name="Cheng C.Y."/>
            <person name="Krishnakumar V."/>
            <person name="Chan A.P."/>
            <person name="Thibaud-Nissen F."/>
            <person name="Schobel S."/>
            <person name="Town C.D."/>
        </authorList>
    </citation>
    <scope>GENOME REANNOTATION</scope>
    <source>
        <strain>cv. Columbia</strain>
    </source>
</reference>
<reference key="3">
    <citation type="journal article" date="2003" name="Science">
        <title>Empirical analysis of transcriptional activity in the Arabidopsis genome.</title>
        <authorList>
            <person name="Yamada K."/>
            <person name="Lim J."/>
            <person name="Dale J.M."/>
            <person name="Chen H."/>
            <person name="Shinn P."/>
            <person name="Palm C.J."/>
            <person name="Southwick A.M."/>
            <person name="Wu H.C."/>
            <person name="Kim C.J."/>
            <person name="Nguyen M."/>
            <person name="Pham P.K."/>
            <person name="Cheuk R.F."/>
            <person name="Karlin-Newmann G."/>
            <person name="Liu S.X."/>
            <person name="Lam B."/>
            <person name="Sakano H."/>
            <person name="Wu T."/>
            <person name="Yu G."/>
            <person name="Miranda M."/>
            <person name="Quach H.L."/>
            <person name="Tripp M."/>
            <person name="Chang C.H."/>
            <person name="Lee J.M."/>
            <person name="Toriumi M.J."/>
            <person name="Chan M.M."/>
            <person name="Tang C.C."/>
            <person name="Onodera C.S."/>
            <person name="Deng J.M."/>
            <person name="Akiyama K."/>
            <person name="Ansari Y."/>
            <person name="Arakawa T."/>
            <person name="Banh J."/>
            <person name="Banno F."/>
            <person name="Bowser L."/>
            <person name="Brooks S.Y."/>
            <person name="Carninci P."/>
            <person name="Chao Q."/>
            <person name="Choy N."/>
            <person name="Enju A."/>
            <person name="Goldsmith A.D."/>
            <person name="Gurjal M."/>
            <person name="Hansen N.F."/>
            <person name="Hayashizaki Y."/>
            <person name="Johnson-Hopson C."/>
            <person name="Hsuan V.W."/>
            <person name="Iida K."/>
            <person name="Karnes M."/>
            <person name="Khan S."/>
            <person name="Koesema E."/>
            <person name="Ishida J."/>
            <person name="Jiang P.X."/>
            <person name="Jones T."/>
            <person name="Kawai J."/>
            <person name="Kamiya A."/>
            <person name="Meyers C."/>
            <person name="Nakajima M."/>
            <person name="Narusaka M."/>
            <person name="Seki M."/>
            <person name="Sakurai T."/>
            <person name="Satou M."/>
            <person name="Tamse R."/>
            <person name="Vaysberg M."/>
            <person name="Wallender E.K."/>
            <person name="Wong C."/>
            <person name="Yamamura Y."/>
            <person name="Yuan S."/>
            <person name="Shinozaki K."/>
            <person name="Davis R.W."/>
            <person name="Theologis A."/>
            <person name="Ecker J.R."/>
        </authorList>
    </citation>
    <scope>NUCLEOTIDE SEQUENCE [LARGE SCALE MRNA] OF 53-782 (ISOFORM 2)</scope>
    <source>
        <strain>cv. Columbia</strain>
    </source>
</reference>
<reference key="4">
    <citation type="journal article" date="2015" name="Front. Plant Sci.">
        <title>Involvement of the cohesin cofactor PDS5 (SPO76) during meiosis and DNA repair in Arabidopsis thaliana.</title>
        <authorList>
            <person name="Pradillo M."/>
            <person name="Knoll A."/>
            <person name="Oliver C."/>
            <person name="Varas J."/>
            <person name="Corredor E."/>
            <person name="Puchta H."/>
            <person name="Santos J.L."/>
        </authorList>
    </citation>
    <scope>FUNCTION</scope>
    <scope>DISRUPTION PHENOTYPE</scope>
    <source>
        <strain>cv. Columbia</strain>
    </source>
</reference>
<reference key="5">
    <citation type="journal article" date="2016" name="Biochem. Biophys. Res. Commun.">
        <title>Plant homologs of mammalian MBT-domain protein-regulated KDM1 histone lysine demethylases do not interact with plant Tudor/PWWP/MBT-domain proteins.</title>
        <authorList>
            <person name="Sadiq I."/>
            <person name="Keren I."/>
            <person name="Citovsky V."/>
        </authorList>
    </citation>
    <scope>GENE FAMILY</scope>
</reference>
<protein>
    <recommendedName>
        <fullName evidence="8">Sister chromatid cohesion protein PDS5 homolog D</fullName>
    </recommendedName>
    <alternativeName>
        <fullName evidence="8">Precocious dissociation of sisters protein 5-D</fullName>
        <shortName evidence="6">AtPDS5D</shortName>
    </alternativeName>
</protein>
<dbReference type="EMBL" id="AC011713">
    <property type="protein sequence ID" value="AAF14668.1"/>
    <property type="status" value="ALT_SEQ"/>
    <property type="molecule type" value="Genomic_DNA"/>
</dbReference>
<dbReference type="EMBL" id="CP002684">
    <property type="protein sequence ID" value="AEE36453.2"/>
    <property type="molecule type" value="Genomic_DNA"/>
</dbReference>
<dbReference type="EMBL" id="CP002684">
    <property type="protein sequence ID" value="ANM59348.1"/>
    <property type="molecule type" value="Genomic_DNA"/>
</dbReference>
<dbReference type="EMBL" id="CP002684">
    <property type="protein sequence ID" value="ANM59349.1"/>
    <property type="molecule type" value="Genomic_DNA"/>
</dbReference>
<dbReference type="EMBL" id="AY050954">
    <property type="status" value="NOT_ANNOTATED_CDS"/>
    <property type="molecule type" value="mRNA"/>
</dbReference>
<dbReference type="PIR" id="F96840">
    <property type="entry name" value="F96840"/>
</dbReference>
<dbReference type="RefSeq" id="NP_001319432.1">
    <molecule id="A8MRD9-2"/>
    <property type="nucleotide sequence ID" value="NM_001335011.1"/>
</dbReference>
<dbReference type="RefSeq" id="NP_001321712.1">
    <molecule id="A8MRD9-1"/>
    <property type="nucleotide sequence ID" value="NM_001335012.1"/>
</dbReference>
<dbReference type="RefSeq" id="NP_001321713.1">
    <molecule id="A8MRD9-2"/>
    <property type="nucleotide sequence ID" value="NM_001335013.1"/>
</dbReference>
<dbReference type="SMR" id="A8MRD9"/>
<dbReference type="FunCoup" id="A8MRD9">
    <property type="interactions" value="225"/>
</dbReference>
<dbReference type="STRING" id="3702.A0A1P8ARR1"/>
<dbReference type="GlyGen" id="A8MRD9">
    <property type="glycosylation" value="1 site"/>
</dbReference>
<dbReference type="iPTMnet" id="A8MRD9"/>
<dbReference type="ProteomicsDB" id="185687"/>
<dbReference type="ProteomicsDB" id="211775"/>
<dbReference type="EnsemblPlants" id="AT1G80810.2">
    <molecule id="A8MRD9-2"/>
    <property type="protein sequence ID" value="AT1G80810.2"/>
    <property type="gene ID" value="AT1G80810"/>
</dbReference>
<dbReference type="EnsemblPlants" id="AT1G80810.3">
    <molecule id="A8MRD9-1"/>
    <property type="protein sequence ID" value="AT1G80810.3"/>
    <property type="gene ID" value="AT1G80810"/>
</dbReference>
<dbReference type="EnsemblPlants" id="AT1G80810.4">
    <molecule id="A8MRD9-2"/>
    <property type="protein sequence ID" value="AT1G80810.4"/>
    <property type="gene ID" value="AT1G80810"/>
</dbReference>
<dbReference type="GeneID" id="844420"/>
<dbReference type="Gramene" id="AT1G80810.2">
    <molecule id="A8MRD9-2"/>
    <property type="protein sequence ID" value="AT1G80810.2"/>
    <property type="gene ID" value="AT1G80810"/>
</dbReference>
<dbReference type="Gramene" id="AT1G80810.3">
    <molecule id="A8MRD9-1"/>
    <property type="protein sequence ID" value="AT1G80810.3"/>
    <property type="gene ID" value="AT1G80810"/>
</dbReference>
<dbReference type="Gramene" id="AT1G80810.4">
    <molecule id="A8MRD9-2"/>
    <property type="protein sequence ID" value="AT1G80810.4"/>
    <property type="gene ID" value="AT1G80810"/>
</dbReference>
<dbReference type="KEGG" id="ath:AT1G80810"/>
<dbReference type="Araport" id="AT1G80810"/>
<dbReference type="TAIR" id="AT1G80810">
    <property type="gene designation" value="PDS5D"/>
</dbReference>
<dbReference type="InParanoid" id="A8MRD9"/>
<dbReference type="OMA" id="YLYKERW"/>
<dbReference type="PhylomeDB" id="A8MRD9"/>
<dbReference type="PRO" id="PR:A8MRD9"/>
<dbReference type="Proteomes" id="UP000006548">
    <property type="component" value="Chromosome 1"/>
</dbReference>
<dbReference type="ExpressionAtlas" id="A8MRD9">
    <property type="expression patterns" value="baseline and differential"/>
</dbReference>
<dbReference type="GO" id="GO:0005634">
    <property type="term" value="C:nucleus"/>
    <property type="evidence" value="ECO:0007669"/>
    <property type="project" value="UniProtKB-SubCell"/>
</dbReference>
<dbReference type="GO" id="GO:0051301">
    <property type="term" value="P:cell division"/>
    <property type="evidence" value="ECO:0007669"/>
    <property type="project" value="UniProtKB-KW"/>
</dbReference>
<dbReference type="GO" id="GO:0006310">
    <property type="term" value="P:DNA recombination"/>
    <property type="evidence" value="ECO:0000315"/>
    <property type="project" value="UniProtKB"/>
</dbReference>
<dbReference type="GO" id="GO:0006281">
    <property type="term" value="P:DNA repair"/>
    <property type="evidence" value="ECO:0000315"/>
    <property type="project" value="UniProtKB"/>
</dbReference>
<dbReference type="GO" id="GO:0035825">
    <property type="term" value="P:homologous recombination"/>
    <property type="evidence" value="ECO:0000315"/>
    <property type="project" value="UniProtKB"/>
</dbReference>
<dbReference type="GO" id="GO:0007064">
    <property type="term" value="P:mitotic sister chromatid cohesion"/>
    <property type="evidence" value="ECO:0000315"/>
    <property type="project" value="UniProtKB"/>
</dbReference>
<dbReference type="CDD" id="cd20404">
    <property type="entry name" value="Tudor_Agenet_AtEML-like"/>
    <property type="match status" value="1"/>
</dbReference>
<dbReference type="Gene3D" id="2.30.30.140">
    <property type="match status" value="1"/>
</dbReference>
<dbReference type="InterPro" id="IPR016024">
    <property type="entry name" value="ARM-type_fold"/>
</dbReference>
<dbReference type="InterPro" id="IPR039776">
    <property type="entry name" value="Pds5"/>
</dbReference>
<dbReference type="PANTHER" id="PTHR12663">
    <property type="entry name" value="ANDROGEN INDUCED INHIBITOR OF PROLIFERATION AS3 / PDS5-RELATED"/>
    <property type="match status" value="1"/>
</dbReference>
<dbReference type="PANTHER" id="PTHR12663:SF55">
    <property type="entry name" value="SISTER CHROMATID COHESION PROTEIN PDS5 HOMOLOG D"/>
    <property type="match status" value="1"/>
</dbReference>
<dbReference type="Pfam" id="PF20168">
    <property type="entry name" value="PDS5"/>
    <property type="match status" value="1"/>
</dbReference>
<dbReference type="SUPFAM" id="SSF48371">
    <property type="entry name" value="ARM repeat"/>
    <property type="match status" value="1"/>
</dbReference>
<dbReference type="SUPFAM" id="SSF63748">
    <property type="entry name" value="Tudor/PWWP/MBT"/>
    <property type="match status" value="1"/>
</dbReference>
<feature type="chain" id="PRO_0000453278" description="Sister chromatid cohesion protein PDS5 homolog D">
    <location>
        <begin position="1"/>
        <end position="826"/>
    </location>
</feature>
<feature type="repeat" description="HEAT 1" evidence="2">
    <location>
        <begin position="18"/>
        <end position="54"/>
    </location>
</feature>
<feature type="repeat" description="HEAT 2" evidence="2">
    <location>
        <begin position="55"/>
        <end position="94"/>
    </location>
</feature>
<feature type="repeat" description="HEAT 3" evidence="2">
    <location>
        <begin position="151"/>
        <end position="188"/>
    </location>
</feature>
<feature type="repeat" description="HEAT 4" evidence="2">
    <location>
        <begin position="189"/>
        <end position="226"/>
    </location>
</feature>
<feature type="repeat" description="HEAT 5" evidence="2">
    <location>
        <begin position="230"/>
        <end position="267"/>
    </location>
</feature>
<feature type="repeat" description="HEAT 6" evidence="2">
    <location>
        <begin position="424"/>
        <end position="461"/>
    </location>
</feature>
<feature type="region of interest" description="Disordered" evidence="4">
    <location>
        <begin position="261"/>
        <end position="551"/>
    </location>
</feature>
<feature type="region of interest" description="Disordered" evidence="4">
    <location>
        <begin position="640"/>
        <end position="826"/>
    </location>
</feature>
<feature type="coiled-coil region" evidence="2">
    <location>
        <begin position="770"/>
        <end position="825"/>
    </location>
</feature>
<feature type="short sequence motif" description="Nuclear localization signal 1" evidence="3">
    <location>
        <begin position="281"/>
        <end position="288"/>
    </location>
</feature>
<feature type="short sequence motif" description="Nuclear localization signal 2" evidence="3">
    <location>
        <begin position="357"/>
        <end position="364"/>
    </location>
</feature>
<feature type="compositionally biased region" description="Basic and acidic residues" evidence="4">
    <location>
        <begin position="269"/>
        <end position="286"/>
    </location>
</feature>
<feature type="compositionally biased region" description="Basic and acidic residues" evidence="4">
    <location>
        <begin position="296"/>
        <end position="309"/>
    </location>
</feature>
<feature type="compositionally biased region" description="Polar residues" evidence="4">
    <location>
        <begin position="311"/>
        <end position="323"/>
    </location>
</feature>
<feature type="compositionally biased region" description="Polar residues" evidence="4">
    <location>
        <begin position="396"/>
        <end position="408"/>
    </location>
</feature>
<feature type="compositionally biased region" description="Basic and acidic residues" evidence="4">
    <location>
        <begin position="437"/>
        <end position="450"/>
    </location>
</feature>
<feature type="compositionally biased region" description="Polar residues" evidence="4">
    <location>
        <begin position="451"/>
        <end position="460"/>
    </location>
</feature>
<feature type="compositionally biased region" description="Low complexity" evidence="4">
    <location>
        <begin position="644"/>
        <end position="663"/>
    </location>
</feature>
<feature type="compositionally biased region" description="Basic and acidic residues" evidence="4">
    <location>
        <begin position="665"/>
        <end position="701"/>
    </location>
</feature>
<feature type="compositionally biased region" description="Acidic residues" evidence="4">
    <location>
        <begin position="702"/>
        <end position="724"/>
    </location>
</feature>
<feature type="compositionally biased region" description="Basic and acidic residues" evidence="4">
    <location>
        <begin position="725"/>
        <end position="746"/>
    </location>
</feature>
<feature type="compositionally biased region" description="Acidic residues" evidence="4">
    <location>
        <begin position="752"/>
        <end position="763"/>
    </location>
</feature>
<feature type="compositionally biased region" description="Acidic residues" evidence="4">
    <location>
        <begin position="771"/>
        <end position="800"/>
    </location>
</feature>
<feature type="compositionally biased region" description="Acidic residues" evidence="4">
    <location>
        <begin position="811"/>
        <end position="826"/>
    </location>
</feature>
<feature type="splice variant" id="VSP_061118" description="In isoform 2.">
    <location>
        <begin position="1"/>
        <end position="52"/>
    </location>
</feature>
<feature type="sequence conflict" description="In Ref. 3; AY050954." evidence="8" ref="3">
    <location>
        <position position="550"/>
    </location>
</feature>
<feature type="sequence conflict" description="In Ref. 3; AY050954." evidence="8" ref="3">
    <original>E</original>
    <variation>EQ</variation>
    <location>
        <position position="618"/>
    </location>
</feature>
<organism>
    <name type="scientific">Arabidopsis thaliana</name>
    <name type="common">Mouse-ear cress</name>
    <dbReference type="NCBI Taxonomy" id="3702"/>
    <lineage>
        <taxon>Eukaryota</taxon>
        <taxon>Viridiplantae</taxon>
        <taxon>Streptophyta</taxon>
        <taxon>Embryophyta</taxon>
        <taxon>Tracheophyta</taxon>
        <taxon>Spermatophyta</taxon>
        <taxon>Magnoliopsida</taxon>
        <taxon>eudicotyledons</taxon>
        <taxon>Gunneridae</taxon>
        <taxon>Pentapetalae</taxon>
        <taxon>rosids</taxon>
        <taxon>malvids</taxon>
        <taxon>Brassicales</taxon>
        <taxon>Brassicaceae</taxon>
        <taxon>Camelineae</taxon>
        <taxon>Arabidopsis</taxon>
    </lineage>
</organism>